<dbReference type="EC" id="2.5.1.9"/>
<dbReference type="EMBL" id="L09228">
    <property type="protein sequence ID" value="AAA67482.1"/>
    <property type="molecule type" value="Genomic_DNA"/>
</dbReference>
<dbReference type="EMBL" id="X51510">
    <property type="protein sequence ID" value="CAA35879.1"/>
    <property type="molecule type" value="Genomic_DNA"/>
</dbReference>
<dbReference type="EMBL" id="AL009126">
    <property type="protein sequence ID" value="CAB14259.1"/>
    <property type="molecule type" value="Genomic_DNA"/>
</dbReference>
<dbReference type="PIR" id="S45544">
    <property type="entry name" value="A35711"/>
</dbReference>
<dbReference type="RefSeq" id="NP_390208.1">
    <property type="nucleotide sequence ID" value="NC_000964.3"/>
</dbReference>
<dbReference type="RefSeq" id="WP_004398505.1">
    <property type="nucleotide sequence ID" value="NZ_OZ025638.1"/>
</dbReference>
<dbReference type="SMR" id="P16440"/>
<dbReference type="FunCoup" id="P16440">
    <property type="interactions" value="611"/>
</dbReference>
<dbReference type="STRING" id="224308.BSU23270"/>
<dbReference type="PaxDb" id="224308-BSU23270"/>
<dbReference type="EnsemblBacteria" id="CAB14259">
    <property type="protein sequence ID" value="CAB14259"/>
    <property type="gene ID" value="BSU_23270"/>
</dbReference>
<dbReference type="GeneID" id="938947"/>
<dbReference type="KEGG" id="bsu:BSU23270"/>
<dbReference type="PATRIC" id="fig|224308.179.peg.2534"/>
<dbReference type="eggNOG" id="COG0307">
    <property type="taxonomic scope" value="Bacteria"/>
</dbReference>
<dbReference type="InParanoid" id="P16440"/>
<dbReference type="OrthoDB" id="9788537at2"/>
<dbReference type="PhylomeDB" id="P16440"/>
<dbReference type="BioCyc" id="BSUB:BSU23270-MONOMER"/>
<dbReference type="BioCyc" id="MetaCyc:MONOMER-14608"/>
<dbReference type="SABIO-RK" id="P16440"/>
<dbReference type="UniPathway" id="UPA00275">
    <property type="reaction ID" value="UER00405"/>
</dbReference>
<dbReference type="Proteomes" id="UP000001570">
    <property type="component" value="Chromosome"/>
</dbReference>
<dbReference type="GO" id="GO:0004746">
    <property type="term" value="F:riboflavin synthase activity"/>
    <property type="evidence" value="ECO:0000318"/>
    <property type="project" value="GO_Central"/>
</dbReference>
<dbReference type="GO" id="GO:0009231">
    <property type="term" value="P:riboflavin biosynthetic process"/>
    <property type="evidence" value="ECO:0000318"/>
    <property type="project" value="GO_Central"/>
</dbReference>
<dbReference type="CDD" id="cd00402">
    <property type="entry name" value="Riboflavin_synthase_like"/>
    <property type="match status" value="1"/>
</dbReference>
<dbReference type="FunFam" id="2.40.30.20:FF:000004">
    <property type="entry name" value="Riboflavin synthase, alpha subunit"/>
    <property type="match status" value="1"/>
</dbReference>
<dbReference type="FunFam" id="2.40.30.20:FF:000006">
    <property type="entry name" value="Riboflavin synthase, alpha subunit"/>
    <property type="match status" value="1"/>
</dbReference>
<dbReference type="Gene3D" id="2.40.30.20">
    <property type="match status" value="2"/>
</dbReference>
<dbReference type="InterPro" id="IPR023366">
    <property type="entry name" value="ATP_synth_asu-like_sf"/>
</dbReference>
<dbReference type="InterPro" id="IPR001783">
    <property type="entry name" value="Lumazine-bd"/>
</dbReference>
<dbReference type="InterPro" id="IPR026017">
    <property type="entry name" value="Lumazine-bd_dom"/>
</dbReference>
<dbReference type="InterPro" id="IPR017938">
    <property type="entry name" value="Riboflavin_synthase-like_b-brl"/>
</dbReference>
<dbReference type="NCBIfam" id="NF006767">
    <property type="entry name" value="PRK09289.1"/>
    <property type="match status" value="1"/>
</dbReference>
<dbReference type="NCBIfam" id="NF009566">
    <property type="entry name" value="PRK13020.1"/>
    <property type="match status" value="1"/>
</dbReference>
<dbReference type="NCBIfam" id="TIGR00187">
    <property type="entry name" value="ribE"/>
    <property type="match status" value="1"/>
</dbReference>
<dbReference type="PANTHER" id="PTHR21098:SF12">
    <property type="entry name" value="RIBOFLAVIN SYNTHASE"/>
    <property type="match status" value="1"/>
</dbReference>
<dbReference type="PANTHER" id="PTHR21098">
    <property type="entry name" value="RIBOFLAVIN SYNTHASE ALPHA CHAIN"/>
    <property type="match status" value="1"/>
</dbReference>
<dbReference type="Pfam" id="PF00677">
    <property type="entry name" value="Lum_binding"/>
    <property type="match status" value="2"/>
</dbReference>
<dbReference type="PIRSF" id="PIRSF000498">
    <property type="entry name" value="Riboflavin_syn_A"/>
    <property type="match status" value="1"/>
</dbReference>
<dbReference type="SUPFAM" id="SSF63380">
    <property type="entry name" value="Riboflavin synthase domain-like"/>
    <property type="match status" value="2"/>
</dbReference>
<dbReference type="PROSITE" id="PS51177">
    <property type="entry name" value="LUMAZINE_BIND"/>
    <property type="match status" value="2"/>
</dbReference>
<keyword id="KW-0903">Direct protein sequencing</keyword>
<keyword id="KW-1185">Reference proteome</keyword>
<keyword id="KW-0677">Repeat</keyword>
<keyword id="KW-0686">Riboflavin biosynthesis</keyword>
<keyword id="KW-0808">Transferase</keyword>
<reference key="1">
    <citation type="journal article" date="1990" name="J. Biol. Chem.">
        <title>Riboflavin synthases of Bacillus subtilis. Purification and amino acid sequence of the alpha subunit.</title>
        <authorList>
            <person name="Schott K."/>
            <person name="Kellermann J."/>
            <person name="Lottspeich F."/>
            <person name="Bacher A."/>
        </authorList>
    </citation>
    <scope>PROTEIN SEQUENCE OF 1-202</scope>
    <scope>SUBUNIT</scope>
</reference>
<reference key="2">
    <citation type="thesis" date="1989" institute="USSR Academy of Sciences" country="Russia">
        <authorList>
            <person name="Mironov V.N."/>
        </authorList>
    </citation>
    <scope>NUCLEOTIDE SEQUENCE [GENOMIC DNA]</scope>
    <source>
        <strain>168 / SHGW</strain>
    </source>
</reference>
<reference key="3">
    <citation type="journal article" date="1993" name="Mol. Microbiol.">
        <title>The organization of the Bacillus subtilis 168 chromosome region between the spoVA and serA genetic loci, based on sequence data.</title>
        <authorList>
            <person name="Sorokin A.V."/>
            <person name="Zumstein E."/>
            <person name="Azevedo V."/>
            <person name="Ehrlich S.D."/>
            <person name="Serror P."/>
        </authorList>
    </citation>
    <scope>NUCLEOTIDE SEQUENCE [GENOMIC DNA]</scope>
    <source>
        <strain>168 / Marburg / ATCC 6051 / DSM 10 / JCM 1465 / NBRC 13719 / NCIMB 3610 / NRRL NRS-744 / VKM B-501</strain>
    </source>
</reference>
<reference key="4">
    <citation type="journal article" date="1997" name="Nature">
        <title>The complete genome sequence of the Gram-positive bacterium Bacillus subtilis.</title>
        <authorList>
            <person name="Kunst F."/>
            <person name="Ogasawara N."/>
            <person name="Moszer I."/>
            <person name="Albertini A.M."/>
            <person name="Alloni G."/>
            <person name="Azevedo V."/>
            <person name="Bertero M.G."/>
            <person name="Bessieres P."/>
            <person name="Bolotin A."/>
            <person name="Borchert S."/>
            <person name="Borriss R."/>
            <person name="Boursier L."/>
            <person name="Brans A."/>
            <person name="Braun M."/>
            <person name="Brignell S.C."/>
            <person name="Bron S."/>
            <person name="Brouillet S."/>
            <person name="Bruschi C.V."/>
            <person name="Caldwell B."/>
            <person name="Capuano V."/>
            <person name="Carter N.M."/>
            <person name="Choi S.-K."/>
            <person name="Codani J.-J."/>
            <person name="Connerton I.F."/>
            <person name="Cummings N.J."/>
            <person name="Daniel R.A."/>
            <person name="Denizot F."/>
            <person name="Devine K.M."/>
            <person name="Duesterhoeft A."/>
            <person name="Ehrlich S.D."/>
            <person name="Emmerson P.T."/>
            <person name="Entian K.-D."/>
            <person name="Errington J."/>
            <person name="Fabret C."/>
            <person name="Ferrari E."/>
            <person name="Foulger D."/>
            <person name="Fritz C."/>
            <person name="Fujita M."/>
            <person name="Fujita Y."/>
            <person name="Fuma S."/>
            <person name="Galizzi A."/>
            <person name="Galleron N."/>
            <person name="Ghim S.-Y."/>
            <person name="Glaser P."/>
            <person name="Goffeau A."/>
            <person name="Golightly E.J."/>
            <person name="Grandi G."/>
            <person name="Guiseppi G."/>
            <person name="Guy B.J."/>
            <person name="Haga K."/>
            <person name="Haiech J."/>
            <person name="Harwood C.R."/>
            <person name="Henaut A."/>
            <person name="Hilbert H."/>
            <person name="Holsappel S."/>
            <person name="Hosono S."/>
            <person name="Hullo M.-F."/>
            <person name="Itaya M."/>
            <person name="Jones L.-M."/>
            <person name="Joris B."/>
            <person name="Karamata D."/>
            <person name="Kasahara Y."/>
            <person name="Klaerr-Blanchard M."/>
            <person name="Klein C."/>
            <person name="Kobayashi Y."/>
            <person name="Koetter P."/>
            <person name="Koningstein G."/>
            <person name="Krogh S."/>
            <person name="Kumano M."/>
            <person name="Kurita K."/>
            <person name="Lapidus A."/>
            <person name="Lardinois S."/>
            <person name="Lauber J."/>
            <person name="Lazarevic V."/>
            <person name="Lee S.-M."/>
            <person name="Levine A."/>
            <person name="Liu H."/>
            <person name="Masuda S."/>
            <person name="Mauel C."/>
            <person name="Medigue C."/>
            <person name="Medina N."/>
            <person name="Mellado R.P."/>
            <person name="Mizuno M."/>
            <person name="Moestl D."/>
            <person name="Nakai S."/>
            <person name="Noback M."/>
            <person name="Noone D."/>
            <person name="O'Reilly M."/>
            <person name="Ogawa K."/>
            <person name="Ogiwara A."/>
            <person name="Oudega B."/>
            <person name="Park S.-H."/>
            <person name="Parro V."/>
            <person name="Pohl T.M."/>
            <person name="Portetelle D."/>
            <person name="Porwollik S."/>
            <person name="Prescott A.M."/>
            <person name="Presecan E."/>
            <person name="Pujic P."/>
            <person name="Purnelle B."/>
            <person name="Rapoport G."/>
            <person name="Rey M."/>
            <person name="Reynolds S."/>
            <person name="Rieger M."/>
            <person name="Rivolta C."/>
            <person name="Rocha E."/>
            <person name="Roche B."/>
            <person name="Rose M."/>
            <person name="Sadaie Y."/>
            <person name="Sato T."/>
            <person name="Scanlan E."/>
            <person name="Schleich S."/>
            <person name="Schroeter R."/>
            <person name="Scoffone F."/>
            <person name="Sekiguchi J."/>
            <person name="Sekowska A."/>
            <person name="Seror S.J."/>
            <person name="Serror P."/>
            <person name="Shin B.-S."/>
            <person name="Soldo B."/>
            <person name="Sorokin A."/>
            <person name="Tacconi E."/>
            <person name="Takagi T."/>
            <person name="Takahashi H."/>
            <person name="Takemaru K."/>
            <person name="Takeuchi M."/>
            <person name="Tamakoshi A."/>
            <person name="Tanaka T."/>
            <person name="Terpstra P."/>
            <person name="Tognoni A."/>
            <person name="Tosato V."/>
            <person name="Uchiyama S."/>
            <person name="Vandenbol M."/>
            <person name="Vannier F."/>
            <person name="Vassarotti A."/>
            <person name="Viari A."/>
            <person name="Wambutt R."/>
            <person name="Wedler E."/>
            <person name="Wedler H."/>
            <person name="Weitzenegger T."/>
            <person name="Winters P."/>
            <person name="Wipat A."/>
            <person name="Yamamoto H."/>
            <person name="Yamane K."/>
            <person name="Yasumoto K."/>
            <person name="Yata K."/>
            <person name="Yoshida K."/>
            <person name="Yoshikawa H.-F."/>
            <person name="Zumstein E."/>
            <person name="Yoshikawa H."/>
            <person name="Danchin A."/>
        </authorList>
    </citation>
    <scope>NUCLEOTIDE SEQUENCE [LARGE SCALE GENOMIC DNA]</scope>
    <source>
        <strain>168</strain>
    </source>
</reference>
<reference key="5">
    <citation type="journal article" date="1980" name="J. Biol. Chem.">
        <title>Riboflavin synthases of Bacillus subtilis. Purification and properties.</title>
        <authorList>
            <person name="Bacher A."/>
            <person name="Baur R."/>
            <person name="Eggers U."/>
            <person name="Harders H.D."/>
            <person name="Otto M.K."/>
            <person name="Schnepple H."/>
        </authorList>
    </citation>
    <scope>FUNCTION</scope>
    <scope>CATALYTIC ACTIVITY</scope>
    <scope>ACTIVITY REGULATION</scope>
    <scope>BIOPHYSICOCHEMICAL PROPERTIES</scope>
    <scope>SUBUNIT</scope>
</reference>
<reference key="6">
    <citation type="journal article" date="1986" name="J. Mol. Biol.">
        <title>Heavy riboflavin synthase from Bacillus subtilis. Quaternary structure and reaggregation.</title>
        <authorList>
            <person name="Bacher A."/>
            <person name="Ludwig H.C."/>
            <person name="Schnepple H."/>
            <person name="Ben-Shaul Y."/>
        </authorList>
    </citation>
    <scope>SUBUNIT</scope>
</reference>
<evidence type="ECO:0000250" key="1">
    <source>
        <dbReference type="UniProtKB" id="P0AFU8"/>
    </source>
</evidence>
<evidence type="ECO:0000250" key="2">
    <source>
        <dbReference type="UniProtKB" id="Q2YN92"/>
    </source>
</evidence>
<evidence type="ECO:0000269" key="3">
    <source>
    </source>
</evidence>
<evidence type="ECO:0000269" key="4">
    <source>
    </source>
</evidence>
<evidence type="ECO:0000269" key="5">
    <source>
    </source>
</evidence>
<name>RISA_BACSU</name>
<gene>
    <name type="primary">ribE</name>
    <name type="synonym">ribB</name>
    <name type="ordered locus">BSU23270</name>
</gene>
<accession>P16440</accession>
<accession>P17619</accession>
<feature type="chain" id="PRO_0000068159" description="Riboflavin synthase">
    <location>
        <begin position="1"/>
        <end position="215"/>
    </location>
</feature>
<feature type="repeat" description="Lumazine-binding 1">
    <location>
        <begin position="1"/>
        <end position="96"/>
    </location>
</feature>
<feature type="repeat" description="Lumazine-binding 2">
    <location>
        <begin position="97"/>
        <end position="193"/>
    </location>
</feature>
<feature type="binding site" evidence="2">
    <location>
        <begin position="4"/>
        <end position="6"/>
    </location>
    <ligand>
        <name>2,4-dihydroxypteridine</name>
        <dbReference type="ChEBI" id="CHEBI:16489"/>
        <label>1</label>
    </ligand>
</feature>
<feature type="binding site" evidence="2">
    <location>
        <begin position="47"/>
        <end position="49"/>
    </location>
    <ligand>
        <name>2,4-dihydroxypteridine</name>
        <dbReference type="ChEBI" id="CHEBI:16489"/>
        <label>2</label>
        <note>ligand shared between two trimeric partners</note>
    </ligand>
</feature>
<feature type="binding site" evidence="1">
    <location>
        <begin position="61"/>
        <end position="66"/>
    </location>
    <ligand>
        <name>2,4-dihydroxypteridine</name>
        <dbReference type="ChEBI" id="CHEBI:16489"/>
        <label>2</label>
        <note>ligand shared between two trimeric partners</note>
    </ligand>
</feature>
<feature type="binding site" evidence="2">
    <location>
        <begin position="100"/>
        <end position="102"/>
    </location>
    <ligand>
        <name>2,4-dihydroxypteridine</name>
        <dbReference type="ChEBI" id="CHEBI:16489"/>
        <label>2</label>
        <note>ligand shared between two trimeric partners</note>
    </ligand>
</feature>
<feature type="binding site" description="in other chain" evidence="2">
    <location>
        <position position="135"/>
    </location>
    <ligand>
        <name>2,4-dihydroxypteridine</name>
        <dbReference type="ChEBI" id="CHEBI:16489"/>
        <label>2</label>
        <note>ligand shared between two trimeric partners</note>
    </ligand>
</feature>
<feature type="binding site" evidence="2">
    <location>
        <begin position="144"/>
        <end position="146"/>
    </location>
    <ligand>
        <name>2,4-dihydroxypteridine</name>
        <dbReference type="ChEBI" id="CHEBI:16489"/>
        <label>1</label>
    </ligand>
</feature>
<feature type="binding site" evidence="2">
    <location>
        <begin position="158"/>
        <end position="163"/>
    </location>
    <ligand>
        <name>2,4-dihydroxypteridine</name>
        <dbReference type="ChEBI" id="CHEBI:16489"/>
        <label>1</label>
    </ligand>
</feature>
<protein>
    <recommendedName>
        <fullName>Riboflavin synthase</fullName>
        <shortName>RS</shortName>
        <ecNumber>2.5.1.9</ecNumber>
    </recommendedName>
    <alternativeName>
        <fullName>Heavy riboflavin synthase alpha subunit</fullName>
        <shortName>HRS alpha subunit</shortName>
    </alternativeName>
    <alternativeName>
        <fullName>Light riboflavin synthase</fullName>
    </alternativeName>
</protein>
<organism>
    <name type="scientific">Bacillus subtilis (strain 168)</name>
    <dbReference type="NCBI Taxonomy" id="224308"/>
    <lineage>
        <taxon>Bacteria</taxon>
        <taxon>Bacillati</taxon>
        <taxon>Bacillota</taxon>
        <taxon>Bacilli</taxon>
        <taxon>Bacillales</taxon>
        <taxon>Bacillaceae</taxon>
        <taxon>Bacillus</taxon>
    </lineage>
</organism>
<comment type="function">
    <text evidence="5">Catalyzes the dismutation of two molecules of 6,7-dimethyl-8-ribityllumazine, resulting in the formation of riboflavin and 5-amino-6-(D-ribitylamino)uracil.</text>
</comment>
<comment type="catalytic activity">
    <reaction evidence="5">
        <text>2 6,7-dimethyl-8-(1-D-ribityl)lumazine + H(+) = 5-amino-6-(D-ribitylamino)uracil + riboflavin</text>
        <dbReference type="Rhea" id="RHEA:20772"/>
        <dbReference type="ChEBI" id="CHEBI:15378"/>
        <dbReference type="ChEBI" id="CHEBI:15934"/>
        <dbReference type="ChEBI" id="CHEBI:57986"/>
        <dbReference type="ChEBI" id="CHEBI:58201"/>
        <dbReference type="EC" id="2.5.1.9"/>
    </reaction>
</comment>
<comment type="activity regulation">
    <text evidence="5">Is activated by sulfite ions.</text>
</comment>
<comment type="biophysicochemical properties">
    <kinetics>
        <KM evidence="5">14 uM for 6,7-dimethyl-8-(1-D-ribityl)lumazine</KM>
    </kinetics>
    <phDependence>
        <text evidence="5">Optimum pH is 7.4.</text>
    </phDependence>
</comment>
<comment type="pathway">
    <text>Cofactor biosynthesis; riboflavin biosynthesis; riboflavin from 2-hydroxy-3-oxobutyl phosphate and 5-amino-6-(D-ribitylamino)uracil: step 2/2.</text>
</comment>
<comment type="subunit">
    <text evidence="3 4 5">Homotrimer. Can interact with 6,7-dimethyl-8-ribityllumazine synthase, forming a lumazine synthase/riboflavin synthase complex, also designated as 'heavy riboflavin synthase complex', which consists of a trimer of riboflavin synthase enclosed within an icosahedral structure composed of 60 subunits of 6,7-dimethyl-8-ribityllumazine synthase.</text>
</comment>
<sequence length="215" mass="23481">MFTGIIEETGTIESMKKAGHAMALTIKCSKILEDVHLGDSIAVNGICLTVTDFTKNQFTVDVMPETVKATSLNDLTKGSKVNLERAMAANGRFGGHFVSGHVDGTAEITRIEEKSNAVYYDLKMDPSLTKTLVLKGSITVDGVSLTIFGLTEDTVTISLIPHTISETIFSEKTIGSKVNIECDMIGKYMYRFLHKANENKTQQTITKAFLSENGF</sequence>
<proteinExistence type="evidence at protein level"/>